<protein>
    <recommendedName>
        <fullName evidence="1">Large ribosomal subunit protein bL19</fullName>
    </recommendedName>
    <alternativeName>
        <fullName evidence="2">50S ribosomal protein L19</fullName>
    </alternativeName>
</protein>
<accession>Q4A881</accession>
<keyword id="KW-0687">Ribonucleoprotein</keyword>
<keyword id="KW-0689">Ribosomal protein</keyword>
<comment type="function">
    <text evidence="1">This protein is located at the 30S-50S ribosomal subunit interface and may play a role in the structure and function of the aminoacyl-tRNA binding site.</text>
</comment>
<comment type="similarity">
    <text evidence="1">Belongs to the bacterial ribosomal protein bL19 family.</text>
</comment>
<proteinExistence type="inferred from homology"/>
<dbReference type="EMBL" id="AE017244">
    <property type="protein sequence ID" value="AAZ53658.1"/>
    <property type="molecule type" value="Genomic_DNA"/>
</dbReference>
<dbReference type="RefSeq" id="WP_011284055.1">
    <property type="nucleotide sequence ID" value="NC_007332.1"/>
</dbReference>
<dbReference type="SMR" id="Q4A881"/>
<dbReference type="GeneID" id="41334587"/>
<dbReference type="KEGG" id="mhp:MHP7448_0284"/>
<dbReference type="HOGENOM" id="CLU_103507_2_2_14"/>
<dbReference type="Proteomes" id="UP000000553">
    <property type="component" value="Chromosome"/>
</dbReference>
<dbReference type="GO" id="GO:0022625">
    <property type="term" value="C:cytosolic large ribosomal subunit"/>
    <property type="evidence" value="ECO:0007669"/>
    <property type="project" value="TreeGrafter"/>
</dbReference>
<dbReference type="GO" id="GO:0003735">
    <property type="term" value="F:structural constituent of ribosome"/>
    <property type="evidence" value="ECO:0007669"/>
    <property type="project" value="InterPro"/>
</dbReference>
<dbReference type="GO" id="GO:0006412">
    <property type="term" value="P:translation"/>
    <property type="evidence" value="ECO:0007669"/>
    <property type="project" value="UniProtKB-UniRule"/>
</dbReference>
<dbReference type="Gene3D" id="2.30.30.790">
    <property type="match status" value="1"/>
</dbReference>
<dbReference type="HAMAP" id="MF_00402">
    <property type="entry name" value="Ribosomal_bL19"/>
    <property type="match status" value="1"/>
</dbReference>
<dbReference type="InterPro" id="IPR001857">
    <property type="entry name" value="Ribosomal_bL19"/>
</dbReference>
<dbReference type="InterPro" id="IPR018257">
    <property type="entry name" value="Ribosomal_bL19_CS"/>
</dbReference>
<dbReference type="InterPro" id="IPR038657">
    <property type="entry name" value="Ribosomal_bL19_sf"/>
</dbReference>
<dbReference type="InterPro" id="IPR008991">
    <property type="entry name" value="Translation_prot_SH3-like_sf"/>
</dbReference>
<dbReference type="NCBIfam" id="TIGR01024">
    <property type="entry name" value="rplS_bact"/>
    <property type="match status" value="1"/>
</dbReference>
<dbReference type="PANTHER" id="PTHR15680:SF9">
    <property type="entry name" value="LARGE RIBOSOMAL SUBUNIT PROTEIN BL19M"/>
    <property type="match status" value="1"/>
</dbReference>
<dbReference type="PANTHER" id="PTHR15680">
    <property type="entry name" value="RIBOSOMAL PROTEIN L19"/>
    <property type="match status" value="1"/>
</dbReference>
<dbReference type="Pfam" id="PF01245">
    <property type="entry name" value="Ribosomal_L19"/>
    <property type="match status" value="1"/>
</dbReference>
<dbReference type="PIRSF" id="PIRSF002191">
    <property type="entry name" value="Ribosomal_L19"/>
    <property type="match status" value="1"/>
</dbReference>
<dbReference type="PRINTS" id="PR00061">
    <property type="entry name" value="RIBOSOMALL19"/>
</dbReference>
<dbReference type="SUPFAM" id="SSF50104">
    <property type="entry name" value="Translation proteins SH3-like domain"/>
    <property type="match status" value="1"/>
</dbReference>
<dbReference type="PROSITE" id="PS01015">
    <property type="entry name" value="RIBOSOMAL_L19"/>
    <property type="match status" value="1"/>
</dbReference>
<evidence type="ECO:0000255" key="1">
    <source>
        <dbReference type="HAMAP-Rule" id="MF_00402"/>
    </source>
</evidence>
<evidence type="ECO:0000305" key="2"/>
<name>RL19_MESH7</name>
<sequence length="121" mass="14231">MQAKLIEILESSQIRLYPQFQPGDNVRVYFKIQEGNKTRIQIFEGLVIKFKKNGLSSNFVVRKISHNVGVERTFLLHSPLVDKVEVIRSNKVRRAKLYYMKKRSGKSARLKEIKRKELKNL</sequence>
<reference key="1">
    <citation type="journal article" date="2005" name="J. Bacteriol.">
        <title>Swine and poultry pathogens: the complete genome sequences of two strains of Mycoplasma hyopneumoniae and a strain of Mycoplasma synoviae.</title>
        <authorList>
            <person name="Vasconcelos A.T.R."/>
            <person name="Ferreira H.B."/>
            <person name="Bizarro C.V."/>
            <person name="Bonatto S.L."/>
            <person name="Carvalho M.O."/>
            <person name="Pinto P.M."/>
            <person name="Almeida D.F."/>
            <person name="Almeida L.G.P."/>
            <person name="Almeida R."/>
            <person name="Alves-Junior L."/>
            <person name="Assuncao E.N."/>
            <person name="Azevedo V.A.C."/>
            <person name="Bogo M.R."/>
            <person name="Brigido M.M."/>
            <person name="Brocchi M."/>
            <person name="Burity H.A."/>
            <person name="Camargo A.A."/>
            <person name="Camargo S.S."/>
            <person name="Carepo M.S."/>
            <person name="Carraro D.M."/>
            <person name="de Mattos Cascardo J.C."/>
            <person name="Castro L.A."/>
            <person name="Cavalcanti G."/>
            <person name="Chemale G."/>
            <person name="Collevatti R.G."/>
            <person name="Cunha C.W."/>
            <person name="Dallagiovanna B."/>
            <person name="Dambros B.P."/>
            <person name="Dellagostin O.A."/>
            <person name="Falcao C."/>
            <person name="Fantinatti-Garboggini F."/>
            <person name="Felipe M.S.S."/>
            <person name="Fiorentin L."/>
            <person name="Franco G.R."/>
            <person name="Freitas N.S.A."/>
            <person name="Frias D."/>
            <person name="Grangeiro T.B."/>
            <person name="Grisard E.C."/>
            <person name="Guimaraes C.T."/>
            <person name="Hungria M."/>
            <person name="Jardim S.N."/>
            <person name="Krieger M.A."/>
            <person name="Laurino J.P."/>
            <person name="Lima L.F.A."/>
            <person name="Lopes M.I."/>
            <person name="Loreto E.L.S."/>
            <person name="Madeira H.M.F."/>
            <person name="Manfio G.P."/>
            <person name="Maranhao A.Q."/>
            <person name="Martinkovics C.T."/>
            <person name="Medeiros S.R.B."/>
            <person name="Moreira M.A.M."/>
            <person name="Neiva M."/>
            <person name="Ramalho-Neto C.E."/>
            <person name="Nicolas M.F."/>
            <person name="Oliveira S.C."/>
            <person name="Paixao R.F.C."/>
            <person name="Pedrosa F.O."/>
            <person name="Pena S.D.J."/>
            <person name="Pereira M."/>
            <person name="Pereira-Ferrari L."/>
            <person name="Piffer I."/>
            <person name="Pinto L.S."/>
            <person name="Potrich D.P."/>
            <person name="Salim A.C.M."/>
            <person name="Santos F.R."/>
            <person name="Schmitt R."/>
            <person name="Schneider M.P.C."/>
            <person name="Schrank A."/>
            <person name="Schrank I.S."/>
            <person name="Schuck A.F."/>
            <person name="Seuanez H.N."/>
            <person name="Silva D.W."/>
            <person name="Silva R."/>
            <person name="Silva S.C."/>
            <person name="Soares C.M.A."/>
            <person name="Souza K.R.L."/>
            <person name="Souza R.C."/>
            <person name="Staats C.C."/>
            <person name="Steffens M.B.R."/>
            <person name="Teixeira S.M.R."/>
            <person name="Urmenyi T.P."/>
            <person name="Vainstein M.H."/>
            <person name="Zuccherato L.W."/>
            <person name="Simpson A.J.G."/>
            <person name="Zaha A."/>
        </authorList>
    </citation>
    <scope>NUCLEOTIDE SEQUENCE [LARGE SCALE GENOMIC DNA]</scope>
    <source>
        <strain>7448</strain>
    </source>
</reference>
<gene>
    <name evidence="1" type="primary">rplS</name>
    <name type="ordered locus">MHP7448_0284</name>
</gene>
<feature type="chain" id="PRO_0000226853" description="Large ribosomal subunit protein bL19">
    <location>
        <begin position="1"/>
        <end position="121"/>
    </location>
</feature>
<organism>
    <name type="scientific">Mesomycoplasma hyopneumoniae (strain 7448)</name>
    <name type="common">Mycoplasma hyopneumoniae</name>
    <dbReference type="NCBI Taxonomy" id="262722"/>
    <lineage>
        <taxon>Bacteria</taxon>
        <taxon>Bacillati</taxon>
        <taxon>Mycoplasmatota</taxon>
        <taxon>Mycoplasmoidales</taxon>
        <taxon>Metamycoplasmataceae</taxon>
        <taxon>Mesomycoplasma</taxon>
    </lineage>
</organism>